<reference key="1">
    <citation type="submission" date="2002-12" db="EMBL/GenBank/DDBJ databases">
        <title>Complete genome sequence of Vibrio vulnificus CMCP6.</title>
        <authorList>
            <person name="Rhee J.H."/>
            <person name="Kim S.Y."/>
            <person name="Chung S.S."/>
            <person name="Kim J.J."/>
            <person name="Moon Y.H."/>
            <person name="Jeong H."/>
            <person name="Choy H.E."/>
        </authorList>
    </citation>
    <scope>NUCLEOTIDE SEQUENCE [LARGE SCALE GENOMIC DNA]</scope>
    <source>
        <strain>CMCP6</strain>
    </source>
</reference>
<organism>
    <name type="scientific">Vibrio vulnificus (strain CMCP6)</name>
    <dbReference type="NCBI Taxonomy" id="216895"/>
    <lineage>
        <taxon>Bacteria</taxon>
        <taxon>Pseudomonadati</taxon>
        <taxon>Pseudomonadota</taxon>
        <taxon>Gammaproteobacteria</taxon>
        <taxon>Vibrionales</taxon>
        <taxon>Vibrionaceae</taxon>
        <taxon>Vibrio</taxon>
    </lineage>
</organism>
<keyword id="KW-0378">Hydrolase</keyword>
<keyword id="KW-0460">Magnesium</keyword>
<keyword id="KW-0479">Metal-binding</keyword>
<keyword id="KW-0704">Schiff base</keyword>
<feature type="chain" id="PRO_0000284605" description="Phosphonoacetaldehyde hydrolase">
    <location>
        <begin position="1"/>
        <end position="271"/>
    </location>
</feature>
<feature type="active site" description="Nucleophile" evidence="1">
    <location>
        <position position="12"/>
    </location>
</feature>
<feature type="active site" description="Schiff-base intermediate with substrate" evidence="1">
    <location>
        <position position="54"/>
    </location>
</feature>
<feature type="binding site" evidence="1">
    <location>
        <position position="12"/>
    </location>
    <ligand>
        <name>Mg(2+)</name>
        <dbReference type="ChEBI" id="CHEBI:18420"/>
    </ligand>
</feature>
<feature type="binding site" evidence="1">
    <location>
        <position position="14"/>
    </location>
    <ligand>
        <name>Mg(2+)</name>
        <dbReference type="ChEBI" id="CHEBI:18420"/>
    </ligand>
</feature>
<feature type="binding site" evidence="1">
    <location>
        <position position="188"/>
    </location>
    <ligand>
        <name>Mg(2+)</name>
        <dbReference type="ChEBI" id="CHEBI:18420"/>
    </ligand>
</feature>
<accession>Q8D3M6</accession>
<gene>
    <name evidence="1" type="primary">phnX</name>
    <name type="ordered locus">VV2_1662</name>
</gene>
<comment type="function">
    <text evidence="1">Involved in phosphonate degradation.</text>
</comment>
<comment type="catalytic activity">
    <reaction evidence="1">
        <text>phosphonoacetaldehyde + H2O = acetaldehyde + phosphate + H(+)</text>
        <dbReference type="Rhea" id="RHEA:18905"/>
        <dbReference type="ChEBI" id="CHEBI:15343"/>
        <dbReference type="ChEBI" id="CHEBI:15377"/>
        <dbReference type="ChEBI" id="CHEBI:15378"/>
        <dbReference type="ChEBI" id="CHEBI:43474"/>
        <dbReference type="ChEBI" id="CHEBI:58383"/>
        <dbReference type="EC" id="3.11.1.1"/>
    </reaction>
</comment>
<comment type="cofactor">
    <cofactor evidence="1">
        <name>Mg(2+)</name>
        <dbReference type="ChEBI" id="CHEBI:18420"/>
    </cofactor>
    <text evidence="1">Binds 1 Mg(2+) ion per subunit.</text>
</comment>
<comment type="subunit">
    <text evidence="1">Homodimer.</text>
</comment>
<comment type="similarity">
    <text evidence="1">Belongs to the HAD-like hydrolase superfamily. PhnX family.</text>
</comment>
<dbReference type="EC" id="3.11.1.1" evidence="1"/>
<dbReference type="EMBL" id="AE016796">
    <property type="protein sequence ID" value="AAO08520.2"/>
    <property type="molecule type" value="Genomic_DNA"/>
</dbReference>
<dbReference type="RefSeq" id="WP_011082503.1">
    <property type="nucleotide sequence ID" value="NC_004460.2"/>
</dbReference>
<dbReference type="SMR" id="Q8D3M6"/>
<dbReference type="KEGG" id="vvu:VV2_1662"/>
<dbReference type="HOGENOM" id="CLU_045011_12_0_6"/>
<dbReference type="Proteomes" id="UP000002275">
    <property type="component" value="Chromosome 2"/>
</dbReference>
<dbReference type="GO" id="GO:0005829">
    <property type="term" value="C:cytosol"/>
    <property type="evidence" value="ECO:0007669"/>
    <property type="project" value="TreeGrafter"/>
</dbReference>
<dbReference type="GO" id="GO:0000287">
    <property type="term" value="F:magnesium ion binding"/>
    <property type="evidence" value="ECO:0007669"/>
    <property type="project" value="UniProtKB-UniRule"/>
</dbReference>
<dbReference type="GO" id="GO:0008967">
    <property type="term" value="F:phosphoglycolate phosphatase activity"/>
    <property type="evidence" value="ECO:0007669"/>
    <property type="project" value="TreeGrafter"/>
</dbReference>
<dbReference type="GO" id="GO:0050194">
    <property type="term" value="F:phosphonoacetaldehyde hydrolase activity"/>
    <property type="evidence" value="ECO:0007669"/>
    <property type="project" value="UniProtKB-UniRule"/>
</dbReference>
<dbReference type="GO" id="GO:0006281">
    <property type="term" value="P:DNA repair"/>
    <property type="evidence" value="ECO:0007669"/>
    <property type="project" value="TreeGrafter"/>
</dbReference>
<dbReference type="GO" id="GO:0019700">
    <property type="term" value="P:organic phosphonate catabolic process"/>
    <property type="evidence" value="ECO:0007669"/>
    <property type="project" value="InterPro"/>
</dbReference>
<dbReference type="CDD" id="cd02586">
    <property type="entry name" value="HAD_PHN"/>
    <property type="match status" value="1"/>
</dbReference>
<dbReference type="FunFam" id="1.10.150.240:FF:000006">
    <property type="entry name" value="Phosphonoacetaldehyde hydrolase"/>
    <property type="match status" value="1"/>
</dbReference>
<dbReference type="Gene3D" id="3.40.50.1000">
    <property type="entry name" value="HAD superfamily/HAD-like"/>
    <property type="match status" value="1"/>
</dbReference>
<dbReference type="Gene3D" id="1.10.150.240">
    <property type="entry name" value="Putative phosphatase, domain 2"/>
    <property type="match status" value="1"/>
</dbReference>
<dbReference type="HAMAP" id="MF_01375">
    <property type="entry name" value="PhnX"/>
    <property type="match status" value="1"/>
</dbReference>
<dbReference type="InterPro" id="IPR050155">
    <property type="entry name" value="HAD-like_hydrolase_sf"/>
</dbReference>
<dbReference type="InterPro" id="IPR036412">
    <property type="entry name" value="HAD-like_sf"/>
</dbReference>
<dbReference type="InterPro" id="IPR006439">
    <property type="entry name" value="HAD-SF_hydro_IA"/>
</dbReference>
<dbReference type="InterPro" id="IPR023214">
    <property type="entry name" value="HAD_sf"/>
</dbReference>
<dbReference type="InterPro" id="IPR023198">
    <property type="entry name" value="PGP-like_dom2"/>
</dbReference>
<dbReference type="InterPro" id="IPR006323">
    <property type="entry name" value="Phosphonoacetald_hydro"/>
</dbReference>
<dbReference type="NCBIfam" id="TIGR01509">
    <property type="entry name" value="HAD-SF-IA-v3"/>
    <property type="match status" value="1"/>
</dbReference>
<dbReference type="NCBIfam" id="TIGR01422">
    <property type="entry name" value="phosphonatase"/>
    <property type="match status" value="1"/>
</dbReference>
<dbReference type="PANTHER" id="PTHR43434">
    <property type="entry name" value="PHOSPHOGLYCOLATE PHOSPHATASE"/>
    <property type="match status" value="1"/>
</dbReference>
<dbReference type="PANTHER" id="PTHR43434:SF19">
    <property type="entry name" value="PHOSPHONOACETALDEHYDE HYDROLASE"/>
    <property type="match status" value="1"/>
</dbReference>
<dbReference type="Pfam" id="PF00702">
    <property type="entry name" value="Hydrolase"/>
    <property type="match status" value="1"/>
</dbReference>
<dbReference type="SFLD" id="SFLDS00003">
    <property type="entry name" value="Haloacid_Dehalogenase"/>
    <property type="match status" value="1"/>
</dbReference>
<dbReference type="SFLD" id="SFLDF00038">
    <property type="entry name" value="phosphonoacetaldehyde_hydrolas"/>
    <property type="match status" value="1"/>
</dbReference>
<dbReference type="SUPFAM" id="SSF56784">
    <property type="entry name" value="HAD-like"/>
    <property type="match status" value="1"/>
</dbReference>
<evidence type="ECO:0000255" key="1">
    <source>
        <dbReference type="HAMAP-Rule" id="MF_01375"/>
    </source>
</evidence>
<protein>
    <recommendedName>
        <fullName evidence="1">Phosphonoacetaldehyde hydrolase</fullName>
        <shortName evidence="1">Phosphonatase</shortName>
        <ecNumber evidence="1">3.11.1.1</ecNumber>
    </recommendedName>
    <alternativeName>
        <fullName evidence="1">Phosphonoacetaldehyde phosphonohydrolase</fullName>
    </alternativeName>
</protein>
<name>PHNX_VIBVU</name>
<sequence length="271" mass="29617">MNKSPIQAVIFDWAGTIVDFGSFAPTSIFVEAFKQGFDFEIDLEEAREPMGLGKWDHIQAVGRIPAVDKRWNEKFGRSMISEDIDAIYAAFMPLQKAKVADHAEPILNAIEVVNGLKDKGIKIGSCSGYPREVMDVLIPVAADYGYQPDYVVATDDLPQGGRPAPFMALKNVIELGVSDVKACVKVDDSAPGIFEGHNAGMWTVGLLLSGNEAGLTFEEYQAADEATLEKAREKARAKLLKSSPHYLIDTIADFPEVVADIERRLAAGERP</sequence>
<proteinExistence type="inferred from homology"/>